<protein>
    <recommendedName>
        <fullName>Meiotically up-regulated gene 43 protein</fullName>
    </recommendedName>
</protein>
<organism>
    <name type="scientific">Schizosaccharomyces pombe (strain 972 / ATCC 24843)</name>
    <name type="common">Fission yeast</name>
    <dbReference type="NCBI Taxonomy" id="284812"/>
    <lineage>
        <taxon>Eukaryota</taxon>
        <taxon>Fungi</taxon>
        <taxon>Dikarya</taxon>
        <taxon>Ascomycota</taxon>
        <taxon>Taphrinomycotina</taxon>
        <taxon>Schizosaccharomycetes</taxon>
        <taxon>Schizosaccharomycetales</taxon>
        <taxon>Schizosaccharomycetaceae</taxon>
        <taxon>Schizosaccharomyces</taxon>
    </lineage>
</organism>
<sequence>MNNITRDIYTKGQPADLKRLLMKRNSFRRPLLNMRCNSVLQYSLEKRKLTVQDLKDTRMELNNMIRILTEAMAAHEWTVDNVNIADIQSLQSTIHSTLKNFQKINVLQLNINASDNSLAYLSKPEESYNFLTIYFSTLLSYEKVENLIKKSLTVIDSLYGLLNYQINAQHSLGCIPLNQDSFKQLKLLICILEEDIKLDDCGLEISASKNEYLEKIKTHYKTWLRIHTFLTLFPVPSVLSSNLKKQMYGWFEDLRDESLKSIILASLSE</sequence>
<evidence type="ECO:0000269" key="1">
    <source>
    </source>
</evidence>
<evidence type="ECO:0000269" key="2">
    <source>
    </source>
</evidence>
<name>MUG43_SCHPO</name>
<dbReference type="EMBL" id="CU329670">
    <property type="protein sequence ID" value="CAB40280.1"/>
    <property type="molecule type" value="Genomic_DNA"/>
</dbReference>
<dbReference type="PIR" id="T39029">
    <property type="entry name" value="T39029"/>
</dbReference>
<dbReference type="SMR" id="Q10308"/>
<dbReference type="BioGRID" id="279702">
    <property type="interactions" value="2"/>
</dbReference>
<dbReference type="STRING" id="284812.Q10308"/>
<dbReference type="PaxDb" id="4896-SPAC6C3.05.1"/>
<dbReference type="EnsemblFungi" id="SPAC6C3.05.1">
    <property type="protein sequence ID" value="SPAC6C3.05.1:pep"/>
    <property type="gene ID" value="SPAC6C3.05"/>
</dbReference>
<dbReference type="KEGG" id="spo:2543274"/>
<dbReference type="PomBase" id="SPAC6C3.05"/>
<dbReference type="VEuPathDB" id="FungiDB:SPAC6C3.05"/>
<dbReference type="HOGENOM" id="CLU_1034985_0_0_1"/>
<dbReference type="InParanoid" id="Q10308"/>
<dbReference type="OMA" id="TITLYER"/>
<dbReference type="PRO" id="PR:Q10308"/>
<dbReference type="Proteomes" id="UP000002485">
    <property type="component" value="Chromosome I"/>
</dbReference>
<dbReference type="GO" id="GO:0005739">
    <property type="term" value="C:mitochondrion"/>
    <property type="evidence" value="ECO:0007005"/>
    <property type="project" value="PomBase"/>
</dbReference>
<dbReference type="GO" id="GO:0051321">
    <property type="term" value="P:meiotic cell cycle"/>
    <property type="evidence" value="ECO:0007669"/>
    <property type="project" value="UniProtKB-KW"/>
</dbReference>
<proteinExistence type="evidence at protein level"/>
<comment type="function">
    <text evidence="1">Has a role in meiosis.</text>
</comment>
<comment type="subcellular location">
    <subcellularLocation>
        <location evidence="2">Mitochondrion</location>
    </subcellularLocation>
</comment>
<reference key="1">
    <citation type="journal article" date="2002" name="Nature">
        <title>The genome sequence of Schizosaccharomyces pombe.</title>
        <authorList>
            <person name="Wood V."/>
            <person name="Gwilliam R."/>
            <person name="Rajandream M.A."/>
            <person name="Lyne M.H."/>
            <person name="Lyne R."/>
            <person name="Stewart A."/>
            <person name="Sgouros J.G."/>
            <person name="Peat N."/>
            <person name="Hayles J."/>
            <person name="Baker S.G."/>
            <person name="Basham D."/>
            <person name="Bowman S."/>
            <person name="Brooks K."/>
            <person name="Brown D."/>
            <person name="Brown S."/>
            <person name="Chillingworth T."/>
            <person name="Churcher C.M."/>
            <person name="Collins M."/>
            <person name="Connor R."/>
            <person name="Cronin A."/>
            <person name="Davis P."/>
            <person name="Feltwell T."/>
            <person name="Fraser A."/>
            <person name="Gentles S."/>
            <person name="Goble A."/>
            <person name="Hamlin N."/>
            <person name="Harris D.E."/>
            <person name="Hidalgo J."/>
            <person name="Hodgson G."/>
            <person name="Holroyd S."/>
            <person name="Hornsby T."/>
            <person name="Howarth S."/>
            <person name="Huckle E.J."/>
            <person name="Hunt S."/>
            <person name="Jagels K."/>
            <person name="James K.D."/>
            <person name="Jones L."/>
            <person name="Jones M."/>
            <person name="Leather S."/>
            <person name="McDonald S."/>
            <person name="McLean J."/>
            <person name="Mooney P."/>
            <person name="Moule S."/>
            <person name="Mungall K.L."/>
            <person name="Murphy L.D."/>
            <person name="Niblett D."/>
            <person name="Odell C."/>
            <person name="Oliver K."/>
            <person name="O'Neil S."/>
            <person name="Pearson D."/>
            <person name="Quail M.A."/>
            <person name="Rabbinowitsch E."/>
            <person name="Rutherford K.M."/>
            <person name="Rutter S."/>
            <person name="Saunders D."/>
            <person name="Seeger K."/>
            <person name="Sharp S."/>
            <person name="Skelton J."/>
            <person name="Simmonds M.N."/>
            <person name="Squares R."/>
            <person name="Squares S."/>
            <person name="Stevens K."/>
            <person name="Taylor K."/>
            <person name="Taylor R.G."/>
            <person name="Tivey A."/>
            <person name="Walsh S.V."/>
            <person name="Warren T."/>
            <person name="Whitehead S."/>
            <person name="Woodward J.R."/>
            <person name="Volckaert G."/>
            <person name="Aert R."/>
            <person name="Robben J."/>
            <person name="Grymonprez B."/>
            <person name="Weltjens I."/>
            <person name="Vanstreels E."/>
            <person name="Rieger M."/>
            <person name="Schaefer M."/>
            <person name="Mueller-Auer S."/>
            <person name="Gabel C."/>
            <person name="Fuchs M."/>
            <person name="Duesterhoeft A."/>
            <person name="Fritzc C."/>
            <person name="Holzer E."/>
            <person name="Moestl D."/>
            <person name="Hilbert H."/>
            <person name="Borzym K."/>
            <person name="Langer I."/>
            <person name="Beck A."/>
            <person name="Lehrach H."/>
            <person name="Reinhardt R."/>
            <person name="Pohl T.M."/>
            <person name="Eger P."/>
            <person name="Zimmermann W."/>
            <person name="Wedler H."/>
            <person name="Wambutt R."/>
            <person name="Purnelle B."/>
            <person name="Goffeau A."/>
            <person name="Cadieu E."/>
            <person name="Dreano S."/>
            <person name="Gloux S."/>
            <person name="Lelaure V."/>
            <person name="Mottier S."/>
            <person name="Galibert F."/>
            <person name="Aves S.J."/>
            <person name="Xiang Z."/>
            <person name="Hunt C."/>
            <person name="Moore K."/>
            <person name="Hurst S.M."/>
            <person name="Lucas M."/>
            <person name="Rochet M."/>
            <person name="Gaillardin C."/>
            <person name="Tallada V.A."/>
            <person name="Garzon A."/>
            <person name="Thode G."/>
            <person name="Daga R.R."/>
            <person name="Cruzado L."/>
            <person name="Jimenez J."/>
            <person name="Sanchez M."/>
            <person name="del Rey F."/>
            <person name="Benito J."/>
            <person name="Dominguez A."/>
            <person name="Revuelta J.L."/>
            <person name="Moreno S."/>
            <person name="Armstrong J."/>
            <person name="Forsburg S.L."/>
            <person name="Cerutti L."/>
            <person name="Lowe T."/>
            <person name="McCombie W.R."/>
            <person name="Paulsen I."/>
            <person name="Potashkin J."/>
            <person name="Shpakovski G.V."/>
            <person name="Ussery D."/>
            <person name="Barrell B.G."/>
            <person name="Nurse P."/>
        </authorList>
    </citation>
    <scope>NUCLEOTIDE SEQUENCE [LARGE SCALE GENOMIC DNA]</scope>
    <source>
        <strain>972 / ATCC 24843</strain>
    </source>
</reference>
<reference key="2">
    <citation type="journal article" date="2005" name="Curr. Biol.">
        <title>A large-scale screen in S. pombe identifies seven novel genes required for critical meiotic events.</title>
        <authorList>
            <person name="Martin-Castellanos C."/>
            <person name="Blanco M."/>
            <person name="Rozalen A.E."/>
            <person name="Perez-Hidalgo L."/>
            <person name="Garcia A.I."/>
            <person name="Conde F."/>
            <person name="Mata J."/>
            <person name="Ellermeier C."/>
            <person name="Davis L."/>
            <person name="San-Segundo P."/>
            <person name="Smith G.R."/>
            <person name="Moreno S."/>
        </authorList>
    </citation>
    <scope>FUNCTION IN MEIOSIS</scope>
</reference>
<reference key="3">
    <citation type="journal article" date="2006" name="Nat. Biotechnol.">
        <title>ORFeome cloning and global analysis of protein localization in the fission yeast Schizosaccharomyces pombe.</title>
        <authorList>
            <person name="Matsuyama A."/>
            <person name="Arai R."/>
            <person name="Yashiroda Y."/>
            <person name="Shirai A."/>
            <person name="Kamata A."/>
            <person name="Sekido S."/>
            <person name="Kobayashi Y."/>
            <person name="Hashimoto A."/>
            <person name="Hamamoto M."/>
            <person name="Hiraoka Y."/>
            <person name="Horinouchi S."/>
            <person name="Yoshida M."/>
        </authorList>
    </citation>
    <scope>SUBCELLULAR LOCATION [LARGE SCALE ANALYSIS]</scope>
</reference>
<keyword id="KW-0469">Meiosis</keyword>
<keyword id="KW-0496">Mitochondrion</keyword>
<keyword id="KW-1185">Reference proteome</keyword>
<gene>
    <name type="primary">mug43</name>
    <name type="ORF">SPAC6C3.05</name>
</gene>
<accession>Q10308</accession>
<feature type="chain" id="PRO_0000116586" description="Meiotically up-regulated gene 43 protein">
    <location>
        <begin position="1"/>
        <end position="269"/>
    </location>
</feature>